<reference key="1">
    <citation type="journal article" date="1995" name="Virus Genes">
        <title>Characterization of a conserved gene block in the murine cytomegalovirus genome.</title>
        <authorList>
            <person name="Messerle M."/>
            <person name="Rapp M."/>
            <person name="Lucin P."/>
            <person name="Koszinowski U.H."/>
        </authorList>
    </citation>
    <scope>NUCLEOTIDE SEQUENCE [GENOMIC DNA]</scope>
</reference>
<reference key="2">
    <citation type="journal article" date="1996" name="J. Virol.">
        <title>Analysis of the complete DNA sequence of murine cytomegalovirus.</title>
        <authorList>
            <person name="Rawlinson W.D."/>
            <person name="Farrell H.E."/>
            <person name="Barrell B.G."/>
        </authorList>
    </citation>
    <scope>NUCLEOTIDE SEQUENCE [LARGE SCALE GENOMIC DNA]</scope>
</reference>
<protein>
    <recommendedName>
        <fullName>mRNA export factor ICP27 homolog</fullName>
    </recommendedName>
</protein>
<accession>Q69154</accession>
<dbReference type="EMBL" id="L07319">
    <property type="protein sequence ID" value="AAA96666.1"/>
    <property type="molecule type" value="Genomic_DNA"/>
</dbReference>
<dbReference type="EMBL" id="U68299">
    <property type="status" value="NOT_ANNOTATED_CDS"/>
    <property type="molecule type" value="Genomic_DNA"/>
</dbReference>
<dbReference type="SMR" id="Q69154"/>
<dbReference type="Proteomes" id="UP000008774">
    <property type="component" value="Segment"/>
</dbReference>
<dbReference type="GO" id="GO:0030430">
    <property type="term" value="C:host cell cytoplasm"/>
    <property type="evidence" value="ECO:0007669"/>
    <property type="project" value="UniProtKB-SubCell"/>
</dbReference>
<dbReference type="GO" id="GO:0042025">
    <property type="term" value="C:host cell nucleus"/>
    <property type="evidence" value="ECO:0007669"/>
    <property type="project" value="UniProtKB-SubCell"/>
</dbReference>
<dbReference type="GO" id="GO:0019033">
    <property type="term" value="C:viral tegument"/>
    <property type="evidence" value="ECO:0007669"/>
    <property type="project" value="UniProtKB-SubCell"/>
</dbReference>
<dbReference type="GO" id="GO:0008270">
    <property type="term" value="F:zinc ion binding"/>
    <property type="evidence" value="ECO:0007669"/>
    <property type="project" value="UniProtKB-KW"/>
</dbReference>
<dbReference type="GO" id="GO:0006355">
    <property type="term" value="P:regulation of DNA-templated transcription"/>
    <property type="evidence" value="ECO:0007669"/>
    <property type="project" value="InterPro"/>
</dbReference>
<dbReference type="InterPro" id="IPR008648">
    <property type="entry name" value="ICP27-like"/>
</dbReference>
<dbReference type="Pfam" id="PF05459">
    <property type="entry name" value="Herpes_UL69"/>
    <property type="match status" value="1"/>
</dbReference>
<sequence length="841" mass="92707">MLRTGVKRRLGPFAGYDEDDAATGGVSRRSKYSQQQSQHYYYGHNQSSYRDSGASHPNWKRNAHLMPPPLSSPSSPPPQYDKNIAALTHLNKKLDCLGPDDLECLKAMIRIREARAQGRRPEPSSAPSILESSLVSSNNSNNNTTLSLGGGGGGDYHRQTSPDIRDYTTGSLGLCMFPMDLPDPIKLLENRYTDNDRHAPAVVTHDELINTNYLLLFRKHFDALPPEELRVLVQDRTFAINNAPSLDVVAAMADENLTYVKFHRVHNLPVNPKDLYMSTLGLIKYATFNKLNLGELSCLLDSPGGGGSDREYHILRQIANKPASPCRKGGSSAAAAASFDVLRRPPLSFKHPLQQALALIASFARIVGVIRRRSLRHSGPFFIRDFDDTGATDSYRCGMISELIFDYLPGHRCQNEICRVKLKKLLQPYTSTLFFCAYNNTRKHPNGLPARRSPERRAPDATPNIPRLAYRRSATTSPEVEPAPPSRMTSSSPRVDSRGGGGDRRGDSSSTSSNHHRHHTRRARTRSTHDSSSSGSRRRSSATDGRRSRRGSRRGEAQRESNGHHSSKSPSTVSSTTVHGQNGARGDSAPSRKSQQSQQQPETTSKESSKTAAMPPPPSPCSPSPASRERRPSKSPSSSPRPHDPPSGEPADAEKELATAGDEDEGVRSPGECSVATRRGSSADESSDSSSSSSDSSSSSDEEESDVEDCRELDLQSKRLEEALEERCERDFEADDEEFAEPIEEDDLHCSLDMEEDIEDEPLDPETESVWTASVTPLAAPPSIRILDHEPGDAEEEEESDTDFYDETDQPLNKRIHLRSATPTDDVIMECDLSYSEMDSD</sequence>
<gene>
    <name type="ORF">UL69</name>
</gene>
<organismHost>
    <name type="scientific">Mus musculus</name>
    <name type="common">Mouse</name>
    <dbReference type="NCBI Taxonomy" id="10090"/>
</organismHost>
<keyword id="KW-1035">Host cytoplasm</keyword>
<keyword id="KW-1048">Host nucleus</keyword>
<keyword id="KW-0479">Metal-binding</keyword>
<keyword id="KW-1185">Reference proteome</keyword>
<keyword id="KW-0804">Transcription</keyword>
<keyword id="KW-0805">Transcription regulation</keyword>
<keyword id="KW-0946">Virion</keyword>
<keyword id="KW-0920">Virion tegument</keyword>
<keyword id="KW-0862">Zinc</keyword>
<keyword id="KW-0863">Zinc-finger</keyword>
<proteinExistence type="inferred from homology"/>
<name>ICP27_MUHVS</name>
<feature type="chain" id="PRO_0000115836" description="mRNA export factor ICP27 homolog">
    <location>
        <begin position="1"/>
        <end position="841"/>
    </location>
</feature>
<feature type="zinc finger region" description="CHC2-type" evidence="2">
    <location>
        <begin position="298"/>
        <end position="418"/>
    </location>
</feature>
<feature type="region of interest" description="Disordered" evidence="3">
    <location>
        <begin position="12"/>
        <end position="82"/>
    </location>
</feature>
<feature type="region of interest" description="Disordered" evidence="3">
    <location>
        <begin position="115"/>
        <end position="163"/>
    </location>
</feature>
<feature type="region of interest" description="Disordered" evidence="3">
    <location>
        <begin position="444"/>
        <end position="749"/>
    </location>
</feature>
<feature type="region of interest" description="Disordered" evidence="3">
    <location>
        <begin position="774"/>
        <end position="811"/>
    </location>
</feature>
<feature type="compositionally biased region" description="Low complexity" evidence="3">
    <location>
        <begin position="32"/>
        <end position="49"/>
    </location>
</feature>
<feature type="compositionally biased region" description="Pro residues" evidence="3">
    <location>
        <begin position="66"/>
        <end position="79"/>
    </location>
</feature>
<feature type="compositionally biased region" description="Low complexity" evidence="3">
    <location>
        <begin position="132"/>
        <end position="147"/>
    </location>
</feature>
<feature type="compositionally biased region" description="Basic and acidic residues" evidence="3">
    <location>
        <begin position="495"/>
        <end position="507"/>
    </location>
</feature>
<feature type="compositionally biased region" description="Basic residues" evidence="3">
    <location>
        <begin position="514"/>
        <end position="526"/>
    </location>
</feature>
<feature type="compositionally biased region" description="Basic and acidic residues" evidence="3">
    <location>
        <begin position="553"/>
        <end position="563"/>
    </location>
</feature>
<feature type="compositionally biased region" description="Low complexity" evidence="3">
    <location>
        <begin position="568"/>
        <end position="579"/>
    </location>
</feature>
<feature type="compositionally biased region" description="Low complexity" evidence="3">
    <location>
        <begin position="591"/>
        <end position="603"/>
    </location>
</feature>
<feature type="compositionally biased region" description="Pro residues" evidence="3">
    <location>
        <begin position="614"/>
        <end position="623"/>
    </location>
</feature>
<feature type="compositionally biased region" description="Basic and acidic residues" evidence="3">
    <location>
        <begin position="641"/>
        <end position="657"/>
    </location>
</feature>
<feature type="compositionally biased region" description="Low complexity" evidence="3">
    <location>
        <begin position="688"/>
        <end position="699"/>
    </location>
</feature>
<feature type="compositionally biased region" description="Basic and acidic residues" evidence="3">
    <location>
        <begin position="708"/>
        <end position="731"/>
    </location>
</feature>
<feature type="compositionally biased region" description="Acidic residues" evidence="3">
    <location>
        <begin position="732"/>
        <end position="749"/>
    </location>
</feature>
<feature type="compositionally biased region" description="Acidic residues" evidence="3">
    <location>
        <begin position="793"/>
        <end position="809"/>
    </location>
</feature>
<feature type="binding site" evidence="2">
    <location>
        <position position="298"/>
    </location>
    <ligand>
        <name>Zn(2+)</name>
        <dbReference type="ChEBI" id="CHEBI:29105"/>
    </ligand>
</feature>
<feature type="binding site" evidence="2">
    <location>
        <position position="411"/>
    </location>
    <ligand>
        <name>Zn(2+)</name>
        <dbReference type="ChEBI" id="CHEBI:29105"/>
    </ligand>
</feature>
<feature type="binding site" evidence="2">
    <location>
        <position position="413"/>
    </location>
    <ligand>
        <name>Zn(2+)</name>
        <dbReference type="ChEBI" id="CHEBI:29105"/>
    </ligand>
</feature>
<feature type="binding site" evidence="2">
    <location>
        <position position="418"/>
    </location>
    <ligand>
        <name>Zn(2+)</name>
        <dbReference type="ChEBI" id="CHEBI:29105"/>
    </ligand>
</feature>
<organism>
    <name type="scientific">Murid herpesvirus 1 (strain Smith)</name>
    <name type="common">MuHV-1</name>
    <name type="synonym">Mouse cytomegalovirus</name>
    <dbReference type="NCBI Taxonomy" id="10367"/>
    <lineage>
        <taxon>Viruses</taxon>
        <taxon>Duplodnaviria</taxon>
        <taxon>Heunggongvirae</taxon>
        <taxon>Peploviricota</taxon>
        <taxon>Herviviricetes</taxon>
        <taxon>Herpesvirales</taxon>
        <taxon>Orthoherpesviridae</taxon>
        <taxon>Betaherpesvirinae</taxon>
        <taxon>Muromegalovirus</taxon>
        <taxon>Muromegalovirus muridbeta1</taxon>
        <taxon>Murid herpesvirus 1</taxon>
    </lineage>
</organism>
<comment type="function">
    <text evidence="1">Immediate early (EI) protein that plays many roles during productive infection including regulation of viral gene expression and nuclear export of intronless viral RNAs.</text>
</comment>
<comment type="subcellular location">
    <subcellularLocation>
        <location evidence="1">Virion tegument</location>
    </subcellularLocation>
    <subcellularLocation>
        <location evidence="1">Virion</location>
    </subcellularLocation>
    <subcellularLocation>
        <location>Host nucleus</location>
    </subcellularLocation>
    <subcellularLocation>
        <location>Host cytoplasm</location>
    </subcellularLocation>
    <text>Shuttles between host nucleus and cytoplasm.</text>
</comment>
<comment type="similarity">
    <text evidence="4">Belongs to the HHV-1 ICP27 protein family.</text>
</comment>
<evidence type="ECO:0000250" key="1"/>
<evidence type="ECO:0000250" key="2">
    <source>
        <dbReference type="UniProtKB" id="P10238"/>
    </source>
</evidence>
<evidence type="ECO:0000256" key="3">
    <source>
        <dbReference type="SAM" id="MobiDB-lite"/>
    </source>
</evidence>
<evidence type="ECO:0000305" key="4"/>